<organism>
    <name type="scientific">Streptococcus agalactiae serotype III (strain NEM316)</name>
    <dbReference type="NCBI Taxonomy" id="211110"/>
    <lineage>
        <taxon>Bacteria</taxon>
        <taxon>Bacillati</taxon>
        <taxon>Bacillota</taxon>
        <taxon>Bacilli</taxon>
        <taxon>Lactobacillales</taxon>
        <taxon>Streptococcaceae</taxon>
        <taxon>Streptococcus</taxon>
    </lineage>
</organism>
<keyword id="KW-1003">Cell membrane</keyword>
<keyword id="KW-0472">Membrane</keyword>
<reference key="1">
    <citation type="journal article" date="2002" name="Mol. Microbiol.">
        <title>Genome sequence of Streptococcus agalactiae, a pathogen causing invasive neonatal disease.</title>
        <authorList>
            <person name="Glaser P."/>
            <person name="Rusniok C."/>
            <person name="Buchrieser C."/>
            <person name="Chevalier F."/>
            <person name="Frangeul L."/>
            <person name="Msadek T."/>
            <person name="Zouine M."/>
            <person name="Couve E."/>
            <person name="Lalioui L."/>
            <person name="Poyart C."/>
            <person name="Trieu-Cuot P."/>
            <person name="Kunst F."/>
        </authorList>
    </citation>
    <scope>NUCLEOTIDE SEQUENCE [LARGE SCALE GENOMIC DNA]</scope>
    <source>
        <strain>NEM316</strain>
    </source>
</reference>
<protein>
    <recommendedName>
        <fullName evidence="1">Putative membrane protein insertion efficiency factor</fullName>
    </recommendedName>
</protein>
<comment type="function">
    <text evidence="1">Could be involved in insertion of integral membrane proteins into the membrane.</text>
</comment>
<comment type="subcellular location">
    <subcellularLocation>
        <location evidence="1">Cell membrane</location>
        <topology evidence="1">Peripheral membrane protein</topology>
        <orientation evidence="1">Cytoplasmic side</orientation>
    </subcellularLocation>
</comment>
<comment type="similarity">
    <text evidence="1">Belongs to the UPF0161 family.</text>
</comment>
<proteinExistence type="inferred from homology"/>
<dbReference type="EMBL" id="AL766852">
    <property type="protein sequence ID" value="CAD47300.1"/>
    <property type="molecule type" value="Genomic_DNA"/>
</dbReference>
<dbReference type="KEGG" id="san:gbs1641"/>
<dbReference type="eggNOG" id="COG0759">
    <property type="taxonomic scope" value="Bacteria"/>
</dbReference>
<dbReference type="HOGENOM" id="CLU_144811_5_2_9"/>
<dbReference type="Proteomes" id="UP000000823">
    <property type="component" value="Chromosome"/>
</dbReference>
<dbReference type="GO" id="GO:0005886">
    <property type="term" value="C:plasma membrane"/>
    <property type="evidence" value="ECO:0007669"/>
    <property type="project" value="UniProtKB-SubCell"/>
</dbReference>
<dbReference type="HAMAP" id="MF_00386">
    <property type="entry name" value="UPF0161_YidD"/>
    <property type="match status" value="1"/>
</dbReference>
<dbReference type="InterPro" id="IPR002696">
    <property type="entry name" value="Membr_insert_effic_factor_YidD"/>
</dbReference>
<dbReference type="NCBIfam" id="TIGR00278">
    <property type="entry name" value="membrane protein insertion efficiency factor YidD"/>
    <property type="match status" value="1"/>
</dbReference>
<dbReference type="PANTHER" id="PTHR33383">
    <property type="entry name" value="MEMBRANE PROTEIN INSERTION EFFICIENCY FACTOR-RELATED"/>
    <property type="match status" value="1"/>
</dbReference>
<dbReference type="PANTHER" id="PTHR33383:SF1">
    <property type="entry name" value="MEMBRANE PROTEIN INSERTION EFFICIENCY FACTOR-RELATED"/>
    <property type="match status" value="1"/>
</dbReference>
<dbReference type="Pfam" id="PF01809">
    <property type="entry name" value="YidD"/>
    <property type="match status" value="1"/>
</dbReference>
<dbReference type="SMART" id="SM01234">
    <property type="entry name" value="Haemolytic"/>
    <property type="match status" value="1"/>
</dbReference>
<name>YIDD_STRA3</name>
<sequence>MLKSFLIFLVRFYQKNISPAFPASCRYCPTCSTYMIEAIQKHGLKGVLMGIARILRCHPLAHGGNDPVPDHFSLRRNKTDISD</sequence>
<feature type="chain" id="PRO_0000171876" description="Putative membrane protein insertion efficiency factor">
    <location>
        <begin position="1"/>
        <end position="83"/>
    </location>
</feature>
<feature type="region of interest" description="Disordered" evidence="2">
    <location>
        <begin position="63"/>
        <end position="83"/>
    </location>
</feature>
<feature type="compositionally biased region" description="Basic and acidic residues" evidence="2">
    <location>
        <begin position="68"/>
        <end position="83"/>
    </location>
</feature>
<evidence type="ECO:0000255" key="1">
    <source>
        <dbReference type="HAMAP-Rule" id="MF_00386"/>
    </source>
</evidence>
<evidence type="ECO:0000256" key="2">
    <source>
        <dbReference type="SAM" id="MobiDB-lite"/>
    </source>
</evidence>
<accession>Q8E3W3</accession>
<gene>
    <name type="ordered locus">gbs1641</name>
</gene>